<gene>
    <name evidence="1" type="primary">murC</name>
    <name type="ordered locus">RSKD131_0418</name>
</gene>
<reference key="1">
    <citation type="journal article" date="2009" name="J. Bacteriol.">
        <title>Complete genome sequence of Rhodobacter sphaeroides KD131.</title>
        <authorList>
            <person name="Lim S.-K."/>
            <person name="Kim S.J."/>
            <person name="Cha S.H."/>
            <person name="Oh Y.-K."/>
            <person name="Rhee H.-J."/>
            <person name="Kim M.-S."/>
            <person name="Lee J.K."/>
        </authorList>
    </citation>
    <scope>NUCLEOTIDE SEQUENCE [LARGE SCALE GENOMIC DNA]</scope>
    <source>
        <strain>KD131 / KCTC 12085</strain>
    </source>
</reference>
<keyword id="KW-0067">ATP-binding</keyword>
<keyword id="KW-0131">Cell cycle</keyword>
<keyword id="KW-0132">Cell division</keyword>
<keyword id="KW-0133">Cell shape</keyword>
<keyword id="KW-0961">Cell wall biogenesis/degradation</keyword>
<keyword id="KW-0963">Cytoplasm</keyword>
<keyword id="KW-0436">Ligase</keyword>
<keyword id="KW-0547">Nucleotide-binding</keyword>
<keyword id="KW-0573">Peptidoglycan synthesis</keyword>
<dbReference type="EC" id="6.3.2.8" evidence="1"/>
<dbReference type="EMBL" id="CP001150">
    <property type="protein sequence ID" value="ACM00278.1"/>
    <property type="molecule type" value="Genomic_DNA"/>
</dbReference>
<dbReference type="RefSeq" id="WP_002719263.1">
    <property type="nucleotide sequence ID" value="NC_011963.1"/>
</dbReference>
<dbReference type="SMR" id="B9KNK0"/>
<dbReference type="GeneID" id="67445880"/>
<dbReference type="KEGG" id="rsk:RSKD131_0418"/>
<dbReference type="HOGENOM" id="CLU_028104_2_1_5"/>
<dbReference type="UniPathway" id="UPA00219"/>
<dbReference type="GO" id="GO:0005737">
    <property type="term" value="C:cytoplasm"/>
    <property type="evidence" value="ECO:0007669"/>
    <property type="project" value="UniProtKB-SubCell"/>
</dbReference>
<dbReference type="GO" id="GO:0005524">
    <property type="term" value="F:ATP binding"/>
    <property type="evidence" value="ECO:0007669"/>
    <property type="project" value="UniProtKB-UniRule"/>
</dbReference>
<dbReference type="GO" id="GO:0008763">
    <property type="term" value="F:UDP-N-acetylmuramate-L-alanine ligase activity"/>
    <property type="evidence" value="ECO:0007669"/>
    <property type="project" value="UniProtKB-UniRule"/>
</dbReference>
<dbReference type="GO" id="GO:0051301">
    <property type="term" value="P:cell division"/>
    <property type="evidence" value="ECO:0007669"/>
    <property type="project" value="UniProtKB-KW"/>
</dbReference>
<dbReference type="GO" id="GO:0071555">
    <property type="term" value="P:cell wall organization"/>
    <property type="evidence" value="ECO:0007669"/>
    <property type="project" value="UniProtKB-KW"/>
</dbReference>
<dbReference type="GO" id="GO:0009252">
    <property type="term" value="P:peptidoglycan biosynthetic process"/>
    <property type="evidence" value="ECO:0007669"/>
    <property type="project" value="UniProtKB-UniRule"/>
</dbReference>
<dbReference type="GO" id="GO:0008360">
    <property type="term" value="P:regulation of cell shape"/>
    <property type="evidence" value="ECO:0007669"/>
    <property type="project" value="UniProtKB-KW"/>
</dbReference>
<dbReference type="Gene3D" id="3.90.190.20">
    <property type="entry name" value="Mur ligase, C-terminal domain"/>
    <property type="match status" value="1"/>
</dbReference>
<dbReference type="Gene3D" id="3.40.1190.10">
    <property type="entry name" value="Mur-like, catalytic domain"/>
    <property type="match status" value="1"/>
</dbReference>
<dbReference type="Gene3D" id="3.40.50.720">
    <property type="entry name" value="NAD(P)-binding Rossmann-like Domain"/>
    <property type="match status" value="1"/>
</dbReference>
<dbReference type="HAMAP" id="MF_00046">
    <property type="entry name" value="MurC"/>
    <property type="match status" value="1"/>
</dbReference>
<dbReference type="InterPro" id="IPR036565">
    <property type="entry name" value="Mur-like_cat_sf"/>
</dbReference>
<dbReference type="InterPro" id="IPR004101">
    <property type="entry name" value="Mur_ligase_C"/>
</dbReference>
<dbReference type="InterPro" id="IPR036615">
    <property type="entry name" value="Mur_ligase_C_dom_sf"/>
</dbReference>
<dbReference type="InterPro" id="IPR013221">
    <property type="entry name" value="Mur_ligase_cen"/>
</dbReference>
<dbReference type="InterPro" id="IPR000713">
    <property type="entry name" value="Mur_ligase_N"/>
</dbReference>
<dbReference type="InterPro" id="IPR050061">
    <property type="entry name" value="MurCDEF_pg_biosynth"/>
</dbReference>
<dbReference type="InterPro" id="IPR005758">
    <property type="entry name" value="UDP-N-AcMur_Ala_ligase_MurC"/>
</dbReference>
<dbReference type="NCBIfam" id="TIGR01082">
    <property type="entry name" value="murC"/>
    <property type="match status" value="1"/>
</dbReference>
<dbReference type="PANTHER" id="PTHR43445:SF3">
    <property type="entry name" value="UDP-N-ACETYLMURAMATE--L-ALANINE LIGASE"/>
    <property type="match status" value="1"/>
</dbReference>
<dbReference type="PANTHER" id="PTHR43445">
    <property type="entry name" value="UDP-N-ACETYLMURAMATE--L-ALANINE LIGASE-RELATED"/>
    <property type="match status" value="1"/>
</dbReference>
<dbReference type="Pfam" id="PF01225">
    <property type="entry name" value="Mur_ligase"/>
    <property type="match status" value="1"/>
</dbReference>
<dbReference type="Pfam" id="PF02875">
    <property type="entry name" value="Mur_ligase_C"/>
    <property type="match status" value="1"/>
</dbReference>
<dbReference type="Pfam" id="PF08245">
    <property type="entry name" value="Mur_ligase_M"/>
    <property type="match status" value="1"/>
</dbReference>
<dbReference type="SUPFAM" id="SSF51984">
    <property type="entry name" value="MurCD N-terminal domain"/>
    <property type="match status" value="1"/>
</dbReference>
<dbReference type="SUPFAM" id="SSF53623">
    <property type="entry name" value="MurD-like peptide ligases, catalytic domain"/>
    <property type="match status" value="1"/>
</dbReference>
<dbReference type="SUPFAM" id="SSF53244">
    <property type="entry name" value="MurD-like peptide ligases, peptide-binding domain"/>
    <property type="match status" value="1"/>
</dbReference>
<proteinExistence type="inferred from homology"/>
<protein>
    <recommendedName>
        <fullName evidence="1">UDP-N-acetylmuramate--L-alanine ligase</fullName>
        <ecNumber evidence="1">6.3.2.8</ecNumber>
    </recommendedName>
    <alternativeName>
        <fullName evidence="1">UDP-N-acetylmuramoyl-L-alanine synthetase</fullName>
    </alternativeName>
</protein>
<feature type="chain" id="PRO_1000192107" description="UDP-N-acetylmuramate--L-alanine ligase">
    <location>
        <begin position="1"/>
        <end position="470"/>
    </location>
</feature>
<feature type="binding site" evidence="1">
    <location>
        <begin position="118"/>
        <end position="124"/>
    </location>
    <ligand>
        <name>ATP</name>
        <dbReference type="ChEBI" id="CHEBI:30616"/>
    </ligand>
</feature>
<organism>
    <name type="scientific">Cereibacter sphaeroides (strain KD131 / KCTC 12085)</name>
    <name type="common">Rhodobacter sphaeroides</name>
    <dbReference type="NCBI Taxonomy" id="557760"/>
    <lineage>
        <taxon>Bacteria</taxon>
        <taxon>Pseudomonadati</taxon>
        <taxon>Pseudomonadota</taxon>
        <taxon>Alphaproteobacteria</taxon>
        <taxon>Rhodobacterales</taxon>
        <taxon>Paracoccaceae</taxon>
        <taxon>Cereibacter</taxon>
    </lineage>
</organism>
<sequence length="470" mass="50110">MNAATKLPGELGPIHFVGIGGIGMSGIAEVLMTLGYRVQGSDAKASKITERLVSLGATFFEGQRAGNLGEAAVVVISSAIKKGNPELEEARLRGLPVVRRAEMLAELMRMRSNIAIAGTHGKTTTTTMVATLLDKGGFDPTVINGGVIHAYGSNARAGAGEWMVVEADESDGSFNRLPATIAIVTNIDPEHMEHWGSFDALRKGFYDFVTNIPFYGLAVCCTDHAEVQALVGRVTDRRIVTFGFNAQADVRAINLRYENGIAHFDVALQSEGTGHVIEGMSLPMPGDHNVSNALAAVAVARHLGMKKDEIREALAAFGGVNRRFTKVGEVGGVTIIDDYGHHPVEIAAVLKAARQAVKGRVIAVHQPHRYSRLHSLFDDFCTCFNEADVVAIAEVYAAGEDPIPGAGRDDLVAGLIAHGHRHARAILCEDDLERLVREQARPGDMVVCLGAGTISAWANNLPARLMGKAA</sequence>
<accession>B9KNK0</accession>
<evidence type="ECO:0000255" key="1">
    <source>
        <dbReference type="HAMAP-Rule" id="MF_00046"/>
    </source>
</evidence>
<comment type="function">
    <text evidence="1">Cell wall formation.</text>
</comment>
<comment type="catalytic activity">
    <reaction evidence="1">
        <text>UDP-N-acetyl-alpha-D-muramate + L-alanine + ATP = UDP-N-acetyl-alpha-D-muramoyl-L-alanine + ADP + phosphate + H(+)</text>
        <dbReference type="Rhea" id="RHEA:23372"/>
        <dbReference type="ChEBI" id="CHEBI:15378"/>
        <dbReference type="ChEBI" id="CHEBI:30616"/>
        <dbReference type="ChEBI" id="CHEBI:43474"/>
        <dbReference type="ChEBI" id="CHEBI:57972"/>
        <dbReference type="ChEBI" id="CHEBI:70757"/>
        <dbReference type="ChEBI" id="CHEBI:83898"/>
        <dbReference type="ChEBI" id="CHEBI:456216"/>
        <dbReference type="EC" id="6.3.2.8"/>
    </reaction>
</comment>
<comment type="pathway">
    <text evidence="1">Cell wall biogenesis; peptidoglycan biosynthesis.</text>
</comment>
<comment type="subcellular location">
    <subcellularLocation>
        <location evidence="1">Cytoplasm</location>
    </subcellularLocation>
</comment>
<comment type="similarity">
    <text evidence="1">Belongs to the MurCDEF family.</text>
</comment>
<name>MURC_CERSK</name>